<sequence>MECNQNYYQILDVDNTATKQQITQSYKKLVRKYHPDRNKNPEAIEKFKLIQSSYEVLSDDLKRLNYDSYLTACSNNNNFDVNNNFDVNNNFDVNNDLFNYYFIMKELFDKYDLNEEEQQEILDIFNIEFYQNNINTIGIDKANEILINKLIEYIPKITIKRISGQNKYLGSVVEFFFSFIT</sequence>
<name>YR266_MIMIV</name>
<dbReference type="EMBL" id="AY653733">
    <property type="protein sequence ID" value="AAV50538.1"/>
    <property type="molecule type" value="Genomic_DNA"/>
</dbReference>
<dbReference type="SMR" id="Q5UPU5"/>
<dbReference type="KEGG" id="vg:9924875"/>
<dbReference type="OrthoDB" id="26421at10239"/>
<dbReference type="Proteomes" id="UP000001134">
    <property type="component" value="Genome"/>
</dbReference>
<dbReference type="CDD" id="cd06257">
    <property type="entry name" value="DnaJ"/>
    <property type="match status" value="1"/>
</dbReference>
<dbReference type="Gene3D" id="1.10.287.110">
    <property type="entry name" value="DnaJ domain"/>
    <property type="match status" value="1"/>
</dbReference>
<dbReference type="InterPro" id="IPR051938">
    <property type="entry name" value="Apopto_cytoskel_mod"/>
</dbReference>
<dbReference type="InterPro" id="IPR001623">
    <property type="entry name" value="DnaJ_domain"/>
</dbReference>
<dbReference type="InterPro" id="IPR018253">
    <property type="entry name" value="DnaJ_domain_CS"/>
</dbReference>
<dbReference type="InterPro" id="IPR036869">
    <property type="entry name" value="J_dom_sf"/>
</dbReference>
<dbReference type="PANTHER" id="PTHR44145">
    <property type="entry name" value="DNAJ HOMOLOG SUBFAMILY A MEMBER 3, MITOCHONDRIAL"/>
    <property type="match status" value="1"/>
</dbReference>
<dbReference type="PANTHER" id="PTHR44145:SF3">
    <property type="entry name" value="DNAJ HOMOLOG SUBFAMILY A MEMBER 3, MITOCHONDRIAL"/>
    <property type="match status" value="1"/>
</dbReference>
<dbReference type="Pfam" id="PF00226">
    <property type="entry name" value="DnaJ"/>
    <property type="match status" value="1"/>
</dbReference>
<dbReference type="PRINTS" id="PR00625">
    <property type="entry name" value="JDOMAIN"/>
</dbReference>
<dbReference type="SMART" id="SM00271">
    <property type="entry name" value="DnaJ"/>
    <property type="match status" value="1"/>
</dbReference>
<dbReference type="SUPFAM" id="SSF46565">
    <property type="entry name" value="Chaperone J-domain"/>
    <property type="match status" value="1"/>
</dbReference>
<dbReference type="PROSITE" id="PS00636">
    <property type="entry name" value="DNAJ_1"/>
    <property type="match status" value="1"/>
</dbReference>
<dbReference type="PROSITE" id="PS50076">
    <property type="entry name" value="DNAJ_2"/>
    <property type="match status" value="1"/>
</dbReference>
<evidence type="ECO:0000255" key="1">
    <source>
        <dbReference type="PROSITE-ProRule" id="PRU00286"/>
    </source>
</evidence>
<proteinExistence type="predicted"/>
<gene>
    <name type="ordered locus">MIMI_R266</name>
</gene>
<accession>Q5UPU5</accession>
<organismHost>
    <name type="scientific">Acanthamoeba polyphaga</name>
    <name type="common">Amoeba</name>
    <dbReference type="NCBI Taxonomy" id="5757"/>
</organismHost>
<keyword id="KW-0143">Chaperone</keyword>
<keyword id="KW-1185">Reference proteome</keyword>
<protein>
    <recommendedName>
        <fullName>Putative J domain-containing protein R266</fullName>
    </recommendedName>
</protein>
<feature type="chain" id="PRO_0000071166" description="Putative J domain-containing protein R266">
    <location>
        <begin position="1"/>
        <end position="181"/>
    </location>
</feature>
<feature type="domain" description="J" evidence="1">
    <location>
        <begin position="6"/>
        <end position="70"/>
    </location>
</feature>
<reference key="1">
    <citation type="journal article" date="2004" name="Science">
        <title>The 1.2-megabase genome sequence of Mimivirus.</title>
        <authorList>
            <person name="Raoult D."/>
            <person name="Audic S."/>
            <person name="Robert C."/>
            <person name="Abergel C."/>
            <person name="Renesto P."/>
            <person name="Ogata H."/>
            <person name="La Scola B."/>
            <person name="Susan M."/>
            <person name="Claverie J.-M."/>
        </authorList>
    </citation>
    <scope>NUCLEOTIDE SEQUENCE [LARGE SCALE GENOMIC DNA]</scope>
    <source>
        <strain>Rowbotham-Bradford</strain>
    </source>
</reference>
<organism>
    <name type="scientific">Acanthamoeba polyphaga mimivirus</name>
    <name type="common">APMV</name>
    <dbReference type="NCBI Taxonomy" id="212035"/>
    <lineage>
        <taxon>Viruses</taxon>
        <taxon>Varidnaviria</taxon>
        <taxon>Bamfordvirae</taxon>
        <taxon>Nucleocytoviricota</taxon>
        <taxon>Megaviricetes</taxon>
        <taxon>Imitervirales</taxon>
        <taxon>Mimiviridae</taxon>
        <taxon>Megamimivirinae</taxon>
        <taxon>Mimivirus</taxon>
        <taxon>Mimivirus bradfordmassiliense</taxon>
    </lineage>
</organism>